<name>FENR_WOLTR</name>
<dbReference type="EC" id="1.18.1.2" evidence="1"/>
<dbReference type="EMBL" id="AE017321">
    <property type="protein sequence ID" value="AAW71273.1"/>
    <property type="molecule type" value="Genomic_DNA"/>
</dbReference>
<dbReference type="RefSeq" id="WP_011256882.1">
    <property type="nucleotide sequence ID" value="NC_006833.1"/>
</dbReference>
<dbReference type="SMR" id="Q5GRV1"/>
<dbReference type="STRING" id="292805.Wbm0685"/>
<dbReference type="KEGG" id="wbm:Wbm0685"/>
<dbReference type="eggNOG" id="COG0492">
    <property type="taxonomic scope" value="Bacteria"/>
</dbReference>
<dbReference type="HOGENOM" id="CLU_031864_5_5_5"/>
<dbReference type="Proteomes" id="UP000000534">
    <property type="component" value="Chromosome"/>
</dbReference>
<dbReference type="GO" id="GO:0004324">
    <property type="term" value="F:ferredoxin-NADP+ reductase activity"/>
    <property type="evidence" value="ECO:0007669"/>
    <property type="project" value="UniProtKB-UniRule"/>
</dbReference>
<dbReference type="GO" id="GO:0050660">
    <property type="term" value="F:flavin adenine dinucleotide binding"/>
    <property type="evidence" value="ECO:0007669"/>
    <property type="project" value="UniProtKB-UniRule"/>
</dbReference>
<dbReference type="GO" id="GO:0050661">
    <property type="term" value="F:NADP binding"/>
    <property type="evidence" value="ECO:0007669"/>
    <property type="project" value="UniProtKB-UniRule"/>
</dbReference>
<dbReference type="Gene3D" id="3.50.50.60">
    <property type="entry name" value="FAD/NAD(P)-binding domain"/>
    <property type="match status" value="2"/>
</dbReference>
<dbReference type="HAMAP" id="MF_01685">
    <property type="entry name" value="FENR2"/>
    <property type="match status" value="1"/>
</dbReference>
<dbReference type="InterPro" id="IPR036188">
    <property type="entry name" value="FAD/NAD-bd_sf"/>
</dbReference>
<dbReference type="InterPro" id="IPR023753">
    <property type="entry name" value="FAD/NAD-binding_dom"/>
</dbReference>
<dbReference type="InterPro" id="IPR022890">
    <property type="entry name" value="Fd--NADP_Rdtase_type_2"/>
</dbReference>
<dbReference type="InterPro" id="IPR050097">
    <property type="entry name" value="Ferredoxin-NADP_redctase_2"/>
</dbReference>
<dbReference type="PANTHER" id="PTHR48105">
    <property type="entry name" value="THIOREDOXIN REDUCTASE 1-RELATED-RELATED"/>
    <property type="match status" value="1"/>
</dbReference>
<dbReference type="Pfam" id="PF07992">
    <property type="entry name" value="Pyr_redox_2"/>
    <property type="match status" value="1"/>
</dbReference>
<dbReference type="PRINTS" id="PR00368">
    <property type="entry name" value="FADPNR"/>
</dbReference>
<dbReference type="PRINTS" id="PR00469">
    <property type="entry name" value="PNDRDTASEII"/>
</dbReference>
<dbReference type="SUPFAM" id="SSF51905">
    <property type="entry name" value="FAD/NAD(P)-binding domain"/>
    <property type="match status" value="1"/>
</dbReference>
<reference key="1">
    <citation type="journal article" date="2005" name="PLoS Biol.">
        <title>The Wolbachia genome of Brugia malayi: endosymbiont evolution within a human pathogenic nematode.</title>
        <authorList>
            <person name="Foster J."/>
            <person name="Ganatra M."/>
            <person name="Kamal I."/>
            <person name="Ware J."/>
            <person name="Makarova K."/>
            <person name="Ivanova N."/>
            <person name="Bhattacharyya A."/>
            <person name="Kapatral V."/>
            <person name="Kumar S."/>
            <person name="Posfai J."/>
            <person name="Vincze T."/>
            <person name="Ingram J."/>
            <person name="Moran L."/>
            <person name="Lapidus A."/>
            <person name="Omelchenko M."/>
            <person name="Kyrpides N."/>
            <person name="Ghedin E."/>
            <person name="Wang S."/>
            <person name="Goltsman E."/>
            <person name="Joukov V."/>
            <person name="Ostrovskaya O."/>
            <person name="Tsukerman K."/>
            <person name="Mazur M."/>
            <person name="Comb D."/>
            <person name="Koonin E."/>
            <person name="Slatko B."/>
        </authorList>
    </citation>
    <scope>NUCLEOTIDE SEQUENCE [LARGE SCALE GENOMIC DNA]</scope>
    <source>
        <strain>TRS</strain>
    </source>
</reference>
<accession>Q5GRV1</accession>
<gene>
    <name type="ordered locus">Wbm0685</name>
</gene>
<proteinExistence type="inferred from homology"/>
<protein>
    <recommendedName>
        <fullName evidence="1">Ferredoxin--NADP reductase</fullName>
        <shortName evidence="1">FNR</shortName>
        <shortName evidence="1">Fd-NADP(+) reductase</shortName>
        <ecNumber evidence="1">1.18.1.2</ecNumber>
    </recommendedName>
</protein>
<keyword id="KW-0274">FAD</keyword>
<keyword id="KW-0285">Flavoprotein</keyword>
<keyword id="KW-0521">NADP</keyword>
<keyword id="KW-0560">Oxidoreductase</keyword>
<keyword id="KW-1185">Reference proteome</keyword>
<feature type="chain" id="PRO_0000364985" description="Ferredoxin--NADP reductase">
    <location>
        <begin position="1"/>
        <end position="339"/>
    </location>
</feature>
<feature type="binding site" evidence="1">
    <location>
        <position position="32"/>
    </location>
    <ligand>
        <name>FAD</name>
        <dbReference type="ChEBI" id="CHEBI:57692"/>
    </ligand>
</feature>
<feature type="binding site" evidence="1">
    <location>
        <position position="40"/>
    </location>
    <ligand>
        <name>FAD</name>
        <dbReference type="ChEBI" id="CHEBI:57692"/>
    </ligand>
</feature>
<feature type="binding site" evidence="1">
    <location>
        <position position="45"/>
    </location>
    <ligand>
        <name>FAD</name>
        <dbReference type="ChEBI" id="CHEBI:57692"/>
    </ligand>
</feature>
<feature type="binding site" evidence="1">
    <location>
        <position position="85"/>
    </location>
    <ligand>
        <name>FAD</name>
        <dbReference type="ChEBI" id="CHEBI:57692"/>
    </ligand>
</feature>
<feature type="binding site" evidence="1">
    <location>
        <position position="120"/>
    </location>
    <ligand>
        <name>FAD</name>
        <dbReference type="ChEBI" id="CHEBI:57692"/>
    </ligand>
</feature>
<feature type="binding site" evidence="1">
    <location>
        <position position="287"/>
    </location>
    <ligand>
        <name>FAD</name>
        <dbReference type="ChEBI" id="CHEBI:57692"/>
    </ligand>
</feature>
<feature type="binding site" evidence="1">
    <location>
        <position position="327"/>
    </location>
    <ligand>
        <name>FAD</name>
        <dbReference type="ChEBI" id="CHEBI:57692"/>
    </ligand>
</feature>
<sequence length="339" mass="37540">METDIVVIGAGPVGIFTAFQAGMLDMRCHIIDVLDQAGGQCTALYPEKPIYDIPGYPVITAQKLIEQLMEQASPFEPVYHLSQRVEEIANNDSQSFIVVTSAGTKVKCKAIIIAAGNGIFEPNRPPLSGILEYENKSVFYNVNKISDFQDKIIVIAGGGDSAADWTVELSKVAKKIYVIHRRKEFRCVSETRNKLKLLESSGRIELVVPYQLHKLTGNDGQLSAVIIKNITSKEEKKISADFLLPFFGLSMDLGPIGSWDIQLERSRVVVDQATLRTSRDRIYAIGDVAAYLGKLKLILNGFAESTMACYDIYKVIHNSPVNFQYSTSKVVRGKKSDLL</sequence>
<organism>
    <name type="scientific">Wolbachia sp. subsp. Brugia malayi (strain TRS)</name>
    <dbReference type="NCBI Taxonomy" id="292805"/>
    <lineage>
        <taxon>Bacteria</taxon>
        <taxon>Pseudomonadati</taxon>
        <taxon>Pseudomonadota</taxon>
        <taxon>Alphaproteobacteria</taxon>
        <taxon>Rickettsiales</taxon>
        <taxon>Anaplasmataceae</taxon>
        <taxon>Wolbachieae</taxon>
        <taxon>Wolbachia</taxon>
    </lineage>
</organism>
<comment type="catalytic activity">
    <reaction evidence="1">
        <text>2 reduced [2Fe-2S]-[ferredoxin] + NADP(+) + H(+) = 2 oxidized [2Fe-2S]-[ferredoxin] + NADPH</text>
        <dbReference type="Rhea" id="RHEA:20125"/>
        <dbReference type="Rhea" id="RHEA-COMP:10000"/>
        <dbReference type="Rhea" id="RHEA-COMP:10001"/>
        <dbReference type="ChEBI" id="CHEBI:15378"/>
        <dbReference type="ChEBI" id="CHEBI:33737"/>
        <dbReference type="ChEBI" id="CHEBI:33738"/>
        <dbReference type="ChEBI" id="CHEBI:57783"/>
        <dbReference type="ChEBI" id="CHEBI:58349"/>
        <dbReference type="EC" id="1.18.1.2"/>
    </reaction>
</comment>
<comment type="cofactor">
    <cofactor evidence="1">
        <name>FAD</name>
        <dbReference type="ChEBI" id="CHEBI:57692"/>
    </cofactor>
    <text evidence="1">Binds 1 FAD per subunit.</text>
</comment>
<comment type="subunit">
    <text evidence="1">Homodimer.</text>
</comment>
<comment type="similarity">
    <text evidence="1">Belongs to the ferredoxin--NADP reductase type 2 family.</text>
</comment>
<evidence type="ECO:0000255" key="1">
    <source>
        <dbReference type="HAMAP-Rule" id="MF_01685"/>
    </source>
</evidence>